<accession>Q7N228</accession>
<sequence length="616" mass="66544">MALLQISEPGLSAAPHQRRLAVGIDLGTTHSLVATVRSGQAETLMDSEERYLLPSVVRYHEKGPEIGWLARQQAAYDPANTISSVKRMMGRSLADIQQRYPNLPYQFQASENGLPLINTATGLVDPIQVSSDILKSLVQRAEETLDGKLDGVVITVPAYFDDAQRQGTKDAARLAGLHVLRLLNEPTAAAIAYGLDSGQEGVIAVYDLGGGTFDVSILRLSRGVFEVLATGGDTALGGDDFDLILADWIREQAGIGSRDDHSLQRQLLDMATQVKIALSDADIAEINIAGWQGKITRCEFEALITPLIKRTLLASRRALKDAEVSADEVLQVVMVGGSTRVPLVRHRVGEFFGREPLTSIDPDKVVAVGASIQADILVGNKPDSDMLLLDVIPLSLGLETMGGLVEKIIPRNTTIPVAKAQEFTTFKDGQSAMSIHVVQGERELVSDCRSLARFTLRGIPPLPAGGAHIRVTFQVDADGLLNVSALEKSTGVEAFIQVKPSYGLSDEEIARMIKDSMANAQEDINARQLAEQKVEAARVLESVTSALEKDADLLNEQEQAAIDAAVETLITSVQGNDPEIIENAIKQLDKQTQEFAARRMDSSIRRALAGHSVDEI</sequence>
<gene>
    <name evidence="1" type="primary">hscA</name>
    <name type="ordered locus">plu3279</name>
</gene>
<organism>
    <name type="scientific">Photorhabdus laumondii subsp. laumondii (strain DSM 15139 / CIP 105565 / TT01)</name>
    <name type="common">Photorhabdus luminescens subsp. laumondii</name>
    <dbReference type="NCBI Taxonomy" id="243265"/>
    <lineage>
        <taxon>Bacteria</taxon>
        <taxon>Pseudomonadati</taxon>
        <taxon>Pseudomonadota</taxon>
        <taxon>Gammaproteobacteria</taxon>
        <taxon>Enterobacterales</taxon>
        <taxon>Morganellaceae</taxon>
        <taxon>Photorhabdus</taxon>
    </lineage>
</organism>
<proteinExistence type="inferred from homology"/>
<keyword id="KW-0067">ATP-binding</keyword>
<keyword id="KW-0143">Chaperone</keyword>
<keyword id="KW-0547">Nucleotide-binding</keyword>
<keyword id="KW-1185">Reference proteome</keyword>
<name>HSCA_PHOLL</name>
<comment type="function">
    <text evidence="1">Chaperone involved in the maturation of iron-sulfur cluster-containing proteins. Has a low intrinsic ATPase activity which is markedly stimulated by HscB. Involved in the maturation of IscU.</text>
</comment>
<comment type="similarity">
    <text evidence="1">Belongs to the heat shock protein 70 family.</text>
</comment>
<reference key="1">
    <citation type="journal article" date="2003" name="Nat. Biotechnol.">
        <title>The genome sequence of the entomopathogenic bacterium Photorhabdus luminescens.</title>
        <authorList>
            <person name="Duchaud E."/>
            <person name="Rusniok C."/>
            <person name="Frangeul L."/>
            <person name="Buchrieser C."/>
            <person name="Givaudan A."/>
            <person name="Taourit S."/>
            <person name="Bocs S."/>
            <person name="Boursaux-Eude C."/>
            <person name="Chandler M."/>
            <person name="Charles J.-F."/>
            <person name="Dassa E."/>
            <person name="Derose R."/>
            <person name="Derzelle S."/>
            <person name="Freyssinet G."/>
            <person name="Gaudriault S."/>
            <person name="Medigue C."/>
            <person name="Lanois A."/>
            <person name="Powell K."/>
            <person name="Siguier P."/>
            <person name="Vincent R."/>
            <person name="Wingate V."/>
            <person name="Zouine M."/>
            <person name="Glaser P."/>
            <person name="Boemare N."/>
            <person name="Danchin A."/>
            <person name="Kunst F."/>
        </authorList>
    </citation>
    <scope>NUCLEOTIDE SEQUENCE [LARGE SCALE GENOMIC DNA]</scope>
    <source>
        <strain>DSM 15139 / CIP 105565 / TT01</strain>
    </source>
</reference>
<dbReference type="EMBL" id="BX571870">
    <property type="protein sequence ID" value="CAE15653.1"/>
    <property type="molecule type" value="Genomic_DNA"/>
</dbReference>
<dbReference type="RefSeq" id="WP_011147474.1">
    <property type="nucleotide sequence ID" value="NC_005126.1"/>
</dbReference>
<dbReference type="SMR" id="Q7N228"/>
<dbReference type="STRING" id="243265.plu3279"/>
<dbReference type="GeneID" id="48849534"/>
<dbReference type="KEGG" id="plu:plu3279"/>
<dbReference type="eggNOG" id="COG0443">
    <property type="taxonomic scope" value="Bacteria"/>
</dbReference>
<dbReference type="HOGENOM" id="CLU_005965_2_3_6"/>
<dbReference type="OrthoDB" id="9766019at2"/>
<dbReference type="Proteomes" id="UP000002514">
    <property type="component" value="Chromosome"/>
</dbReference>
<dbReference type="GO" id="GO:0005524">
    <property type="term" value="F:ATP binding"/>
    <property type="evidence" value="ECO:0007669"/>
    <property type="project" value="UniProtKB-KW"/>
</dbReference>
<dbReference type="GO" id="GO:0016887">
    <property type="term" value="F:ATP hydrolysis activity"/>
    <property type="evidence" value="ECO:0007669"/>
    <property type="project" value="UniProtKB-UniRule"/>
</dbReference>
<dbReference type="GO" id="GO:0140662">
    <property type="term" value="F:ATP-dependent protein folding chaperone"/>
    <property type="evidence" value="ECO:0007669"/>
    <property type="project" value="InterPro"/>
</dbReference>
<dbReference type="GO" id="GO:0051082">
    <property type="term" value="F:unfolded protein binding"/>
    <property type="evidence" value="ECO:0007669"/>
    <property type="project" value="InterPro"/>
</dbReference>
<dbReference type="GO" id="GO:0016226">
    <property type="term" value="P:iron-sulfur cluster assembly"/>
    <property type="evidence" value="ECO:0007669"/>
    <property type="project" value="InterPro"/>
</dbReference>
<dbReference type="CDD" id="cd10236">
    <property type="entry name" value="ASKHA_NBD_HSP70_HscA"/>
    <property type="match status" value="1"/>
</dbReference>
<dbReference type="FunFam" id="3.30.420.40:FF:000046">
    <property type="entry name" value="Chaperone protein HscA"/>
    <property type="match status" value="1"/>
</dbReference>
<dbReference type="FunFam" id="2.60.34.10:FF:000005">
    <property type="entry name" value="Chaperone protein HscA homolog"/>
    <property type="match status" value="1"/>
</dbReference>
<dbReference type="Gene3D" id="1.20.1270.10">
    <property type="match status" value="1"/>
</dbReference>
<dbReference type="Gene3D" id="3.30.420.40">
    <property type="match status" value="2"/>
</dbReference>
<dbReference type="Gene3D" id="3.90.640.10">
    <property type="entry name" value="Actin, Chain A, domain 4"/>
    <property type="match status" value="1"/>
</dbReference>
<dbReference type="Gene3D" id="2.60.34.10">
    <property type="entry name" value="Substrate Binding Domain Of DNAk, Chain A, domain 1"/>
    <property type="match status" value="1"/>
</dbReference>
<dbReference type="HAMAP" id="MF_00679">
    <property type="entry name" value="HscA"/>
    <property type="match status" value="1"/>
</dbReference>
<dbReference type="InterPro" id="IPR043129">
    <property type="entry name" value="ATPase_NBD"/>
</dbReference>
<dbReference type="InterPro" id="IPR018181">
    <property type="entry name" value="Heat_shock_70_CS"/>
</dbReference>
<dbReference type="InterPro" id="IPR042039">
    <property type="entry name" value="HscA_NBD"/>
</dbReference>
<dbReference type="InterPro" id="IPR029048">
    <property type="entry name" value="HSP70_C_sf"/>
</dbReference>
<dbReference type="InterPro" id="IPR029047">
    <property type="entry name" value="HSP70_peptide-bd_sf"/>
</dbReference>
<dbReference type="InterPro" id="IPR013126">
    <property type="entry name" value="Hsp_70_fam"/>
</dbReference>
<dbReference type="InterPro" id="IPR010236">
    <property type="entry name" value="ISC_FeS_clus_asmbl_HscA"/>
</dbReference>
<dbReference type="NCBIfam" id="TIGR01991">
    <property type="entry name" value="HscA"/>
    <property type="match status" value="1"/>
</dbReference>
<dbReference type="NCBIfam" id="NF003520">
    <property type="entry name" value="PRK05183.1"/>
    <property type="match status" value="1"/>
</dbReference>
<dbReference type="PANTHER" id="PTHR19375">
    <property type="entry name" value="HEAT SHOCK PROTEIN 70KDA"/>
    <property type="match status" value="1"/>
</dbReference>
<dbReference type="Pfam" id="PF00012">
    <property type="entry name" value="HSP70"/>
    <property type="match status" value="1"/>
</dbReference>
<dbReference type="PRINTS" id="PR00301">
    <property type="entry name" value="HEATSHOCK70"/>
</dbReference>
<dbReference type="SUPFAM" id="SSF53067">
    <property type="entry name" value="Actin-like ATPase domain"/>
    <property type="match status" value="2"/>
</dbReference>
<dbReference type="SUPFAM" id="SSF100934">
    <property type="entry name" value="Heat shock protein 70kD (HSP70), C-terminal subdomain"/>
    <property type="match status" value="1"/>
</dbReference>
<dbReference type="SUPFAM" id="SSF100920">
    <property type="entry name" value="Heat shock protein 70kD (HSP70), peptide-binding domain"/>
    <property type="match status" value="1"/>
</dbReference>
<dbReference type="PROSITE" id="PS00297">
    <property type="entry name" value="HSP70_1"/>
    <property type="match status" value="1"/>
</dbReference>
<dbReference type="PROSITE" id="PS00329">
    <property type="entry name" value="HSP70_2"/>
    <property type="match status" value="1"/>
</dbReference>
<protein>
    <recommendedName>
        <fullName evidence="1">Chaperone protein HscA</fullName>
    </recommendedName>
    <alternativeName>
        <fullName evidence="1">Hsc66</fullName>
    </alternativeName>
</protein>
<evidence type="ECO:0000255" key="1">
    <source>
        <dbReference type="HAMAP-Rule" id="MF_00679"/>
    </source>
</evidence>
<feature type="chain" id="PRO_0000078637" description="Chaperone protein HscA">
    <location>
        <begin position="1"/>
        <end position="616"/>
    </location>
</feature>